<proteinExistence type="inferred from homology"/>
<name>XYL2_ARTOC</name>
<comment type="function">
    <text evidence="1">Xylitol dehydrogenase which catalyzes the conversion of xylitol to D-xylulose. Xylose is a major component of hemicelluloses such as xylan. Most fungi utilize D-xylose via three enzymatic reactions, xylose reductase (XR), xylitol dehydrogenase (XDH), and xylulokinase, to form xylulose 5-phosphate, which enters pentose phosphate pathway (By similarity).</text>
</comment>
<comment type="catalytic activity">
    <reaction>
        <text>xylitol + NAD(+) = D-xylulose + NADH + H(+)</text>
        <dbReference type="Rhea" id="RHEA:20433"/>
        <dbReference type="ChEBI" id="CHEBI:15378"/>
        <dbReference type="ChEBI" id="CHEBI:17140"/>
        <dbReference type="ChEBI" id="CHEBI:17151"/>
        <dbReference type="ChEBI" id="CHEBI:57540"/>
        <dbReference type="ChEBI" id="CHEBI:57945"/>
        <dbReference type="EC" id="1.1.1.9"/>
    </reaction>
</comment>
<comment type="cofactor">
    <cofactor evidence="1">
        <name>Zn(2+)</name>
        <dbReference type="ChEBI" id="CHEBI:29105"/>
    </cofactor>
    <text evidence="1">Binds 1 zinc ion per subunit.</text>
</comment>
<comment type="pathway">
    <text>Carbohydrate degradation; L-arabinose degradation via L-arabinitol; D-xylulose 5-phosphate from L-arabinose (fungal route): step 4/5.</text>
</comment>
<comment type="similarity">
    <text evidence="3">Belongs to the zinc-containing alcohol dehydrogenase family.</text>
</comment>
<dbReference type="EC" id="1.1.1.9"/>
<dbReference type="EMBL" id="DS995705">
    <property type="protein sequence ID" value="EEQ33284.1"/>
    <property type="molecule type" value="Genomic_DNA"/>
</dbReference>
<dbReference type="RefSeq" id="XP_002846234.1">
    <property type="nucleotide sequence ID" value="XM_002846188.1"/>
</dbReference>
<dbReference type="SMR" id="C5FTT1"/>
<dbReference type="STRING" id="554155.C5FTT1"/>
<dbReference type="GeneID" id="9228403"/>
<dbReference type="VEuPathDB" id="FungiDB:MCYG_06103"/>
<dbReference type="eggNOG" id="KOG0024">
    <property type="taxonomic scope" value="Eukaryota"/>
</dbReference>
<dbReference type="HOGENOM" id="CLU_026673_11_5_1"/>
<dbReference type="OMA" id="FETWYAM"/>
<dbReference type="OrthoDB" id="3941538at2759"/>
<dbReference type="UniPathway" id="UPA00146">
    <property type="reaction ID" value="UER00577"/>
</dbReference>
<dbReference type="Proteomes" id="UP000002035">
    <property type="component" value="Unassembled WGS sequence"/>
</dbReference>
<dbReference type="GO" id="GO:0046526">
    <property type="term" value="F:D-xylulose reductase activity"/>
    <property type="evidence" value="ECO:0007669"/>
    <property type="project" value="UniProtKB-EC"/>
</dbReference>
<dbReference type="GO" id="GO:0003939">
    <property type="term" value="F:L-iditol 2-dehydrogenase (NAD+) activity"/>
    <property type="evidence" value="ECO:0007669"/>
    <property type="project" value="TreeGrafter"/>
</dbReference>
<dbReference type="GO" id="GO:0008270">
    <property type="term" value="F:zinc ion binding"/>
    <property type="evidence" value="ECO:0007669"/>
    <property type="project" value="InterPro"/>
</dbReference>
<dbReference type="GO" id="GO:0042732">
    <property type="term" value="P:D-xylose metabolic process"/>
    <property type="evidence" value="ECO:0007669"/>
    <property type="project" value="UniProtKB-KW"/>
</dbReference>
<dbReference type="GO" id="GO:0019569">
    <property type="term" value="P:L-arabinose catabolic process to xylulose 5-phosphate"/>
    <property type="evidence" value="ECO:0007669"/>
    <property type="project" value="UniProtKB-UniPathway"/>
</dbReference>
<dbReference type="GO" id="GO:0006062">
    <property type="term" value="P:sorbitol catabolic process"/>
    <property type="evidence" value="ECO:0007669"/>
    <property type="project" value="TreeGrafter"/>
</dbReference>
<dbReference type="CDD" id="cd05285">
    <property type="entry name" value="sorbitol_DH"/>
    <property type="match status" value="1"/>
</dbReference>
<dbReference type="FunFam" id="3.40.50.720:FF:000068">
    <property type="entry name" value="Sorbitol dehydrogenase"/>
    <property type="match status" value="1"/>
</dbReference>
<dbReference type="Gene3D" id="3.90.180.10">
    <property type="entry name" value="Medium-chain alcohol dehydrogenases, catalytic domain"/>
    <property type="match status" value="1"/>
</dbReference>
<dbReference type="Gene3D" id="3.40.50.720">
    <property type="entry name" value="NAD(P)-binding Rossmann-like Domain"/>
    <property type="match status" value="1"/>
</dbReference>
<dbReference type="InterPro" id="IPR013149">
    <property type="entry name" value="ADH-like_C"/>
</dbReference>
<dbReference type="InterPro" id="IPR013154">
    <property type="entry name" value="ADH-like_N"/>
</dbReference>
<dbReference type="InterPro" id="IPR002328">
    <property type="entry name" value="ADH_Zn_CS"/>
</dbReference>
<dbReference type="InterPro" id="IPR011032">
    <property type="entry name" value="GroES-like_sf"/>
</dbReference>
<dbReference type="InterPro" id="IPR036291">
    <property type="entry name" value="NAD(P)-bd_dom_sf"/>
</dbReference>
<dbReference type="InterPro" id="IPR020843">
    <property type="entry name" value="PKS_ER"/>
</dbReference>
<dbReference type="InterPro" id="IPR045306">
    <property type="entry name" value="SDH-like"/>
</dbReference>
<dbReference type="PANTHER" id="PTHR43161">
    <property type="entry name" value="SORBITOL DEHYDROGENASE"/>
    <property type="match status" value="1"/>
</dbReference>
<dbReference type="PANTHER" id="PTHR43161:SF9">
    <property type="entry name" value="SORBITOL DEHYDROGENASE"/>
    <property type="match status" value="1"/>
</dbReference>
<dbReference type="Pfam" id="PF08240">
    <property type="entry name" value="ADH_N"/>
    <property type="match status" value="1"/>
</dbReference>
<dbReference type="Pfam" id="PF00107">
    <property type="entry name" value="ADH_zinc_N"/>
    <property type="match status" value="1"/>
</dbReference>
<dbReference type="SMART" id="SM00829">
    <property type="entry name" value="PKS_ER"/>
    <property type="match status" value="1"/>
</dbReference>
<dbReference type="SUPFAM" id="SSF50129">
    <property type="entry name" value="GroES-like"/>
    <property type="match status" value="1"/>
</dbReference>
<dbReference type="SUPFAM" id="SSF51735">
    <property type="entry name" value="NAD(P)-binding Rossmann-fold domains"/>
    <property type="match status" value="1"/>
</dbReference>
<dbReference type="PROSITE" id="PS00059">
    <property type="entry name" value="ADH_ZINC"/>
    <property type="match status" value="1"/>
</dbReference>
<sequence>MAADEPKNLSFVLEGIKKVKFEDRPVPVLKDAHDVLVNVRYTGICGSDVHYWDHGSIGPFVLTEPMVLGHESSGVVTEIGPAVKSLKVGDRVALEPGICCRRCEPCKSGKYNLCVDMVFAATPPYDGTLAKYYVLPEDFCYKLPSAMDLKDGALMEPLGVAVHITRQAEVKPGDTVVVFGAGPVGLLCCAASRAFGAIKIISVDIQPERLDFAKKYAATGVFLPEKASAVENAERLRSGHGLGRGADVVIDASGAEQSVHTGIYVARPGGTYVQGGMGRDEISFPIMAACTKELNMKGSFRYNSGDYKLALELVGSGRLSVKELVTKVVAFTDAEQAFEEVKAGKGIKTLIAGVDG</sequence>
<organism>
    <name type="scientific">Arthroderma otae (strain ATCC MYA-4605 / CBS 113480)</name>
    <name type="common">Microsporum canis</name>
    <dbReference type="NCBI Taxonomy" id="554155"/>
    <lineage>
        <taxon>Eukaryota</taxon>
        <taxon>Fungi</taxon>
        <taxon>Dikarya</taxon>
        <taxon>Ascomycota</taxon>
        <taxon>Pezizomycotina</taxon>
        <taxon>Eurotiomycetes</taxon>
        <taxon>Eurotiomycetidae</taxon>
        <taxon>Onygenales</taxon>
        <taxon>Arthrodermataceae</taxon>
        <taxon>Microsporum</taxon>
    </lineage>
</organism>
<protein>
    <recommendedName>
        <fullName>Probable D-xylulose reductase A</fullName>
        <ecNumber>1.1.1.9</ecNumber>
    </recommendedName>
    <alternativeName>
        <fullName>Xylitol dehydrogenase A</fullName>
    </alternativeName>
</protein>
<gene>
    <name type="primary">xdhA</name>
    <name type="ORF">MCYG_06103</name>
</gene>
<accession>C5FTT1</accession>
<evidence type="ECO:0000250" key="1"/>
<evidence type="ECO:0000255" key="2"/>
<evidence type="ECO:0000305" key="3"/>
<reference key="1">
    <citation type="journal article" date="2012" name="MBio">
        <title>Comparative genome analysis of Trichophyton rubrum and related dermatophytes reveals candidate genes involved in infection.</title>
        <authorList>
            <person name="Martinez D.A."/>
            <person name="Oliver B.G."/>
            <person name="Graeser Y."/>
            <person name="Goldberg J.M."/>
            <person name="Li W."/>
            <person name="Martinez-Rossi N.M."/>
            <person name="Monod M."/>
            <person name="Shelest E."/>
            <person name="Barton R.C."/>
            <person name="Birch E."/>
            <person name="Brakhage A.A."/>
            <person name="Chen Z."/>
            <person name="Gurr S.J."/>
            <person name="Heiman D."/>
            <person name="Heitman J."/>
            <person name="Kosti I."/>
            <person name="Rossi A."/>
            <person name="Saif S."/>
            <person name="Samalova M."/>
            <person name="Saunders C.W."/>
            <person name="Shea T."/>
            <person name="Summerbell R.C."/>
            <person name="Xu J."/>
            <person name="Young S."/>
            <person name="Zeng Q."/>
            <person name="Birren B.W."/>
            <person name="Cuomo C.A."/>
            <person name="White T.C."/>
        </authorList>
    </citation>
    <scope>NUCLEOTIDE SEQUENCE [LARGE SCALE GENOMIC DNA]</scope>
    <source>
        <strain>ATCC MYA-4605 / CBS 113480</strain>
    </source>
</reference>
<keyword id="KW-0119">Carbohydrate metabolism</keyword>
<keyword id="KW-0479">Metal-binding</keyword>
<keyword id="KW-0520">NAD</keyword>
<keyword id="KW-0560">Oxidoreductase</keyword>
<keyword id="KW-1185">Reference proteome</keyword>
<keyword id="KW-0859">Xylose metabolism</keyword>
<keyword id="KW-0862">Zinc</keyword>
<feature type="chain" id="PRO_0000393514" description="Probable D-xylulose reductase A">
    <location>
        <begin position="1"/>
        <end position="356"/>
    </location>
</feature>
<feature type="binding site" evidence="1">
    <location>
        <position position="45"/>
    </location>
    <ligand>
        <name>Zn(2+)</name>
        <dbReference type="ChEBI" id="CHEBI:29105"/>
        <note>catalytic</note>
    </ligand>
</feature>
<feature type="binding site" evidence="1">
    <location>
        <position position="70"/>
    </location>
    <ligand>
        <name>Zn(2+)</name>
        <dbReference type="ChEBI" id="CHEBI:29105"/>
        <note>catalytic</note>
    </ligand>
</feature>
<feature type="binding site" evidence="1">
    <location>
        <position position="71"/>
    </location>
    <ligand>
        <name>Zn(2+)</name>
        <dbReference type="ChEBI" id="CHEBI:29105"/>
        <note>catalytic</note>
    </ligand>
</feature>
<feature type="binding site" evidence="2">
    <location>
        <begin position="180"/>
        <end position="185"/>
    </location>
    <ligand>
        <name>NAD(+)</name>
        <dbReference type="ChEBI" id="CHEBI:57540"/>
    </ligand>
</feature>